<feature type="chain" id="PRO_0000370422" description="Ribosome biogenesis protein erb1">
    <location>
        <begin position="1"/>
        <end position="763"/>
    </location>
</feature>
<feature type="repeat" description="WD 1">
    <location>
        <begin position="414"/>
        <end position="453"/>
    </location>
</feature>
<feature type="repeat" description="WD 2">
    <location>
        <begin position="457"/>
        <end position="497"/>
    </location>
</feature>
<feature type="repeat" description="WD 3">
    <location>
        <begin position="593"/>
        <end position="633"/>
    </location>
</feature>
<feature type="repeat" description="WD 4">
    <location>
        <begin position="634"/>
        <end position="673"/>
    </location>
</feature>
<feature type="repeat" description="WD 5">
    <location>
        <begin position="677"/>
        <end position="717"/>
    </location>
</feature>
<feature type="repeat" description="WD 6">
    <location>
        <begin position="733"/>
        <end position="763"/>
    </location>
</feature>
<feature type="region of interest" description="Disordered" evidence="2">
    <location>
        <begin position="1"/>
        <end position="110"/>
    </location>
</feature>
<feature type="region of interest" description="Disordered" evidence="2">
    <location>
        <begin position="318"/>
        <end position="341"/>
    </location>
</feature>
<feature type="compositionally biased region" description="Acidic residues" evidence="2">
    <location>
        <begin position="19"/>
        <end position="29"/>
    </location>
</feature>
<feature type="compositionally biased region" description="Acidic residues" evidence="2">
    <location>
        <begin position="41"/>
        <end position="74"/>
    </location>
</feature>
<feature type="compositionally biased region" description="Basic and acidic residues" evidence="2">
    <location>
        <begin position="327"/>
        <end position="341"/>
    </location>
</feature>
<protein>
    <recommendedName>
        <fullName evidence="1">Ribosome biogenesis protein erb1</fullName>
    </recommendedName>
    <alternativeName>
        <fullName evidence="1">Eukaryotic ribosome biogenesis protein 1</fullName>
    </alternativeName>
</protein>
<organism>
    <name type="scientific">Botryotinia fuckeliana (strain B05.10)</name>
    <name type="common">Noble rot fungus</name>
    <name type="synonym">Botrytis cinerea</name>
    <dbReference type="NCBI Taxonomy" id="332648"/>
    <lineage>
        <taxon>Eukaryota</taxon>
        <taxon>Fungi</taxon>
        <taxon>Dikarya</taxon>
        <taxon>Ascomycota</taxon>
        <taxon>Pezizomycotina</taxon>
        <taxon>Leotiomycetes</taxon>
        <taxon>Helotiales</taxon>
        <taxon>Sclerotiniaceae</taxon>
        <taxon>Botrytis</taxon>
    </lineage>
</organism>
<proteinExistence type="inferred from homology"/>
<name>ERB1_BOTFB</name>
<dbReference type="EMBL" id="CP009815">
    <property type="protein sequence ID" value="ATZ55127.1"/>
    <property type="molecule type" value="Genomic_DNA"/>
</dbReference>
<dbReference type="SMR" id="A6RRD4"/>
<dbReference type="EnsemblFungi" id="Bcin11g04150.1">
    <property type="protein sequence ID" value="Bcin11p04150.1"/>
    <property type="gene ID" value="Bcin11g04150"/>
</dbReference>
<dbReference type="GeneID" id="5439141"/>
<dbReference type="KEGG" id="bfu:BCIN_11g04150"/>
<dbReference type="VEuPathDB" id="FungiDB:Bcin11g04150"/>
<dbReference type="OMA" id="MRPAKGE"/>
<dbReference type="OrthoDB" id="5571054at2759"/>
<dbReference type="Proteomes" id="UP000001798">
    <property type="component" value="Chromosome bcin11"/>
</dbReference>
<dbReference type="GO" id="GO:0005654">
    <property type="term" value="C:nucleoplasm"/>
    <property type="evidence" value="ECO:0007669"/>
    <property type="project" value="UniProtKB-SubCell"/>
</dbReference>
<dbReference type="GO" id="GO:0070545">
    <property type="term" value="C:PeBoW complex"/>
    <property type="evidence" value="ECO:0007669"/>
    <property type="project" value="EnsemblFungi"/>
</dbReference>
<dbReference type="GO" id="GO:0030687">
    <property type="term" value="C:preribosome, large subunit precursor"/>
    <property type="evidence" value="ECO:0007669"/>
    <property type="project" value="UniProtKB-UniRule"/>
</dbReference>
<dbReference type="GO" id="GO:0070180">
    <property type="term" value="F:large ribosomal subunit rRNA binding"/>
    <property type="evidence" value="ECO:0007669"/>
    <property type="project" value="EnsemblFungi"/>
</dbReference>
<dbReference type="GO" id="GO:0043021">
    <property type="term" value="F:ribonucleoprotein complex binding"/>
    <property type="evidence" value="ECO:0007669"/>
    <property type="project" value="UniProtKB-UniRule"/>
</dbReference>
<dbReference type="GO" id="GO:0000466">
    <property type="term" value="P:maturation of 5.8S rRNA from tricistronic rRNA transcript (SSU-rRNA, 5.8S rRNA, LSU-rRNA)"/>
    <property type="evidence" value="ECO:0007669"/>
    <property type="project" value="UniProtKB-UniRule"/>
</dbReference>
<dbReference type="GO" id="GO:0000463">
    <property type="term" value="P:maturation of LSU-rRNA from tricistronic rRNA transcript (SSU-rRNA, 5.8S rRNA, LSU-rRNA)"/>
    <property type="evidence" value="ECO:0007669"/>
    <property type="project" value="UniProtKB-UniRule"/>
</dbReference>
<dbReference type="FunFam" id="2.130.10.10:FF:000061">
    <property type="entry name" value="Ribosome biogenesis protein BOP1 homolog"/>
    <property type="match status" value="1"/>
</dbReference>
<dbReference type="Gene3D" id="2.130.10.10">
    <property type="entry name" value="YVTN repeat-like/Quinoprotein amine dehydrogenase"/>
    <property type="match status" value="1"/>
</dbReference>
<dbReference type="HAMAP" id="MF_03027">
    <property type="entry name" value="BOP1"/>
    <property type="match status" value="1"/>
</dbReference>
<dbReference type="InterPro" id="IPR028598">
    <property type="entry name" value="BOP1/Erb1"/>
</dbReference>
<dbReference type="InterPro" id="IPR012953">
    <property type="entry name" value="BOP1_N_dom"/>
</dbReference>
<dbReference type="InterPro" id="IPR015943">
    <property type="entry name" value="WD40/YVTN_repeat-like_dom_sf"/>
</dbReference>
<dbReference type="InterPro" id="IPR019775">
    <property type="entry name" value="WD40_repeat_CS"/>
</dbReference>
<dbReference type="InterPro" id="IPR036322">
    <property type="entry name" value="WD40_repeat_dom_sf"/>
</dbReference>
<dbReference type="InterPro" id="IPR001680">
    <property type="entry name" value="WD40_rpt"/>
</dbReference>
<dbReference type="PANTHER" id="PTHR17605:SF0">
    <property type="entry name" value="RIBOSOME BIOGENESIS PROTEIN BOP1"/>
    <property type="match status" value="1"/>
</dbReference>
<dbReference type="PANTHER" id="PTHR17605">
    <property type="entry name" value="RIBOSOME BIOGENESIS PROTEIN BOP1 BLOCK OF PROLIFERATION 1 PROTEIN"/>
    <property type="match status" value="1"/>
</dbReference>
<dbReference type="Pfam" id="PF08145">
    <property type="entry name" value="BOP1NT"/>
    <property type="match status" value="1"/>
</dbReference>
<dbReference type="Pfam" id="PF00400">
    <property type="entry name" value="WD40"/>
    <property type="match status" value="2"/>
</dbReference>
<dbReference type="SMART" id="SM01035">
    <property type="entry name" value="BOP1NT"/>
    <property type="match status" value="1"/>
</dbReference>
<dbReference type="SMART" id="SM00320">
    <property type="entry name" value="WD40"/>
    <property type="match status" value="5"/>
</dbReference>
<dbReference type="SUPFAM" id="SSF50978">
    <property type="entry name" value="WD40 repeat-like"/>
    <property type="match status" value="1"/>
</dbReference>
<dbReference type="PROSITE" id="PS00678">
    <property type="entry name" value="WD_REPEATS_1"/>
    <property type="match status" value="1"/>
</dbReference>
<dbReference type="PROSITE" id="PS50082">
    <property type="entry name" value="WD_REPEATS_2"/>
    <property type="match status" value="2"/>
</dbReference>
<dbReference type="PROSITE" id="PS50294">
    <property type="entry name" value="WD_REPEATS_REGION"/>
    <property type="match status" value="2"/>
</dbReference>
<reference key="1">
    <citation type="journal article" date="2011" name="PLoS Genet.">
        <title>Genomic analysis of the necrotrophic fungal pathogens Sclerotinia sclerotiorum and Botrytis cinerea.</title>
        <authorList>
            <person name="Amselem J."/>
            <person name="Cuomo C.A."/>
            <person name="van Kan J.A.L."/>
            <person name="Viaud M."/>
            <person name="Benito E.P."/>
            <person name="Couloux A."/>
            <person name="Coutinho P.M."/>
            <person name="de Vries R.P."/>
            <person name="Dyer P.S."/>
            <person name="Fillinger S."/>
            <person name="Fournier E."/>
            <person name="Gout L."/>
            <person name="Hahn M."/>
            <person name="Kohn L."/>
            <person name="Lapalu N."/>
            <person name="Plummer K.M."/>
            <person name="Pradier J.-M."/>
            <person name="Quevillon E."/>
            <person name="Sharon A."/>
            <person name="Simon A."/>
            <person name="ten Have A."/>
            <person name="Tudzynski B."/>
            <person name="Tudzynski P."/>
            <person name="Wincker P."/>
            <person name="Andrew M."/>
            <person name="Anthouard V."/>
            <person name="Beever R.E."/>
            <person name="Beffa R."/>
            <person name="Benoit I."/>
            <person name="Bouzid O."/>
            <person name="Brault B."/>
            <person name="Chen Z."/>
            <person name="Choquer M."/>
            <person name="Collemare J."/>
            <person name="Cotton P."/>
            <person name="Danchin E.G."/>
            <person name="Da Silva C."/>
            <person name="Gautier A."/>
            <person name="Giraud C."/>
            <person name="Giraud T."/>
            <person name="Gonzalez C."/>
            <person name="Grossetete S."/>
            <person name="Gueldener U."/>
            <person name="Henrissat B."/>
            <person name="Howlett B.J."/>
            <person name="Kodira C."/>
            <person name="Kretschmer M."/>
            <person name="Lappartient A."/>
            <person name="Leroch M."/>
            <person name="Levis C."/>
            <person name="Mauceli E."/>
            <person name="Neuveglise C."/>
            <person name="Oeser B."/>
            <person name="Pearson M."/>
            <person name="Poulain J."/>
            <person name="Poussereau N."/>
            <person name="Quesneville H."/>
            <person name="Rascle C."/>
            <person name="Schumacher J."/>
            <person name="Segurens B."/>
            <person name="Sexton A."/>
            <person name="Silva E."/>
            <person name="Sirven C."/>
            <person name="Soanes D.M."/>
            <person name="Talbot N.J."/>
            <person name="Templeton M."/>
            <person name="Yandava C."/>
            <person name="Yarden O."/>
            <person name="Zeng Q."/>
            <person name="Rollins J.A."/>
            <person name="Lebrun M.-H."/>
            <person name="Dickman M."/>
        </authorList>
    </citation>
    <scope>NUCLEOTIDE SEQUENCE [LARGE SCALE GENOMIC DNA]</scope>
    <source>
        <strain>B05.10</strain>
    </source>
</reference>
<reference key="2">
    <citation type="journal article" date="2012" name="Eukaryot. Cell">
        <title>Genome update of Botrytis cinerea strains B05.10 and T4.</title>
        <authorList>
            <person name="Staats M."/>
            <person name="van Kan J.A.L."/>
        </authorList>
    </citation>
    <scope>NUCLEOTIDE SEQUENCE [LARGE SCALE GENOMIC DNA]</scope>
    <scope>GENOME REANNOTATION</scope>
    <source>
        <strain>B05.10</strain>
    </source>
</reference>
<reference key="3">
    <citation type="journal article" date="2017" name="Mol. Plant Pathol.">
        <title>A gapless genome sequence of the fungus Botrytis cinerea.</title>
        <authorList>
            <person name="van Kan J.A.L."/>
            <person name="Stassen J.H.M."/>
            <person name="Mosbach A."/>
            <person name="van der Lee T.A.J."/>
            <person name="Faino L."/>
            <person name="Farmer A.D."/>
            <person name="Papasotiriou D.G."/>
            <person name="Zhou S."/>
            <person name="Seidl M.F."/>
            <person name="Cottam E."/>
            <person name="Edel D."/>
            <person name="Hahn M."/>
            <person name="Schwartz D.C."/>
            <person name="Dietrich R.A."/>
            <person name="Widdison S."/>
            <person name="Scalliet G."/>
        </authorList>
    </citation>
    <scope>NUCLEOTIDE SEQUENCE [LARGE SCALE GENOMIC DNA]</scope>
    <scope>GENOME REANNOTATION</scope>
    <source>
        <strain>B05.10</strain>
    </source>
</reference>
<accession>A6RRD4</accession>
<accession>A0A384JXZ2</accession>
<sequence length="763" mass="85812">MAPPTNQRKRKAVTRDEPEISDVESEAEFGDGILEGILSQSEDESDDSAAEEDSEDEEDLDEEELEALDSDEVPSENGEGEGSMTRTSLNKINADEDDDKPNYTVVKDANGGERYVYEEINPVYDSDDSDAQEPTNTIGNIPLSFYDSYPHIGYDINGKKIMRPAKGEALDALLDSIDIPKGWTGLTDPSTGKPLNLTQEELEVLRRIQTNEVPEDGYDPYPDYVPYFSGVEEIMPLSSAPEPKRRFLPSKHEAKRIMKIVRAIREGRILPYKPPQEREEEEEEHHYDIWQNEEAQPDHIMKIPAPKPPPPGYDLSYNPPPEYLPSKAERKEWEATDPEDREKEYLPTAYDSLRKVPGYDKFINERFERSLDLYLAPRVRKNRLNIDPASLLPKLPKPEELKPFPTVTQTLFRGHDGRVRSLAIDPSGTWLATGGDDGTVRVWELLTGKQLWSAQIGDEEAVNVVKWRPAKDAIILSAAAGDDIFLMVPTIIDPVAESNSRELLDAGFGYATNATQALTANGQKKEPVATWARPTSRLQDEGVLIKITVRSTVKVINWHRRGDFFSTVSPTAQKSAVAIHTLSKHLTQIPFRRLPGIAQTAQFHPSRPIFFVATQRTIRSYDLQKQELVKIIQPGARWISSFDIHPGGDNLIVGSYDRRLLWHDLDLSTRPYKTMRFHNKAIRAVKYHKGGLPLFADASDDGSLQIFHGKVVSDAMENATIVPVKVLKGHKVKSALGVMDLDWHPKEPWLVSAGADGTCRLWT</sequence>
<comment type="function">
    <text evidence="1">Component of the NOP7 complex, which is required for maturation of the 25S and 5.8S ribosomal RNAs and formation of the 60S ribosome.</text>
</comment>
<comment type="subunit">
    <text evidence="1">Component of the NOP7 complex, composed of erb1, nop7 and ytm1. The complex is held together by erb1, which interacts with nop7 via its N-terminal domain and with ytm1 via a high-affinity interaction between the seven-bladed beta-propeller domains of the 2 proteins. The NOP7 complex associates with the 66S pre-ribosome.</text>
</comment>
<comment type="subcellular location">
    <subcellularLocation>
        <location evidence="1">Nucleus</location>
        <location evidence="1">Nucleolus</location>
    </subcellularLocation>
    <subcellularLocation>
        <location evidence="1">Nucleus</location>
        <location evidence="1">Nucleoplasm</location>
    </subcellularLocation>
</comment>
<comment type="similarity">
    <text evidence="1">Belongs to the WD repeat BOP1/ERB1 family.</text>
</comment>
<keyword id="KW-0539">Nucleus</keyword>
<keyword id="KW-1185">Reference proteome</keyword>
<keyword id="KW-0677">Repeat</keyword>
<keyword id="KW-0690">Ribosome biogenesis</keyword>
<keyword id="KW-0698">rRNA processing</keyword>
<keyword id="KW-0853">WD repeat</keyword>
<evidence type="ECO:0000255" key="1">
    <source>
        <dbReference type="HAMAP-Rule" id="MF_03027"/>
    </source>
</evidence>
<evidence type="ECO:0000256" key="2">
    <source>
        <dbReference type="SAM" id="MobiDB-lite"/>
    </source>
</evidence>
<gene>
    <name type="primary">erb1</name>
    <name type="ORF">BC1G_03375</name>
    <name type="ORF">BCIN_11g04150</name>
</gene>